<sequence>MRASASSAVTVVNAFATGVGSAIGIDLWTRAEVKLKGDGIEGEIRVRGEQVRDFRLVKAVADVFREKTGEEFGIKFRIESEIPIAMGLKSSSAAANALSKALADALGLDMSEMEVVKAGVEAAKRAGVTLTGAFDDACASYFGSLWVTDNLGMRVLHSSKVEPLPVVLLLPGKTLLTESLGGRDFSPIRPYVEEAVRLALEGEWRKAALINGLVYSTYLGHPIEPFRIALERGAVVGLSGKGPAVFAVTNEPEELAEEWEQFGKVLTTELR</sequence>
<protein>
    <recommendedName>
        <fullName evidence="1">Shikimate kinase</fullName>
        <shortName evidence="1">SK</shortName>
        <ecNumber evidence="1">2.7.1.71</ecNumber>
    </recommendedName>
</protein>
<accession>Q5JFT2</accession>
<gene>
    <name evidence="1" type="primary">aroK</name>
    <name type="ordered locus">TK0264</name>
</gene>
<comment type="catalytic activity">
    <reaction evidence="1">
        <text>shikimate + ATP = 3-phosphoshikimate + ADP + H(+)</text>
        <dbReference type="Rhea" id="RHEA:13121"/>
        <dbReference type="ChEBI" id="CHEBI:15378"/>
        <dbReference type="ChEBI" id="CHEBI:30616"/>
        <dbReference type="ChEBI" id="CHEBI:36208"/>
        <dbReference type="ChEBI" id="CHEBI:145989"/>
        <dbReference type="ChEBI" id="CHEBI:456216"/>
        <dbReference type="EC" id="2.7.1.71"/>
    </reaction>
</comment>
<comment type="pathway">
    <text evidence="1">Metabolic intermediate biosynthesis; chorismate biosynthesis; chorismate from D-erythrose 4-phosphate and phosphoenolpyruvate: step 5/7.</text>
</comment>
<comment type="subcellular location">
    <subcellularLocation>
        <location evidence="1">Cytoplasm</location>
    </subcellularLocation>
</comment>
<comment type="similarity">
    <text evidence="1">Belongs to the GHMP kinase family. Archaeal shikimate kinase subfamily.</text>
</comment>
<organism>
    <name type="scientific">Thermococcus kodakarensis (strain ATCC BAA-918 / JCM 12380 / KOD1)</name>
    <name type="common">Pyrococcus kodakaraensis (strain KOD1)</name>
    <dbReference type="NCBI Taxonomy" id="69014"/>
    <lineage>
        <taxon>Archaea</taxon>
        <taxon>Methanobacteriati</taxon>
        <taxon>Methanobacteriota</taxon>
        <taxon>Thermococci</taxon>
        <taxon>Thermococcales</taxon>
        <taxon>Thermococcaceae</taxon>
        <taxon>Thermococcus</taxon>
    </lineage>
</organism>
<feature type="chain" id="PRO_0000141579" description="Shikimate kinase">
    <location>
        <begin position="1"/>
        <end position="271"/>
    </location>
</feature>
<feature type="binding site" evidence="1">
    <location>
        <begin position="83"/>
        <end position="93"/>
    </location>
    <ligand>
        <name>ATP</name>
        <dbReference type="ChEBI" id="CHEBI:30616"/>
    </ligand>
</feature>
<reference key="1">
    <citation type="journal article" date="2005" name="Genome Res.">
        <title>Complete genome sequence of the hyperthermophilic archaeon Thermococcus kodakaraensis KOD1 and comparison with Pyrococcus genomes.</title>
        <authorList>
            <person name="Fukui T."/>
            <person name="Atomi H."/>
            <person name="Kanai T."/>
            <person name="Matsumi R."/>
            <person name="Fujiwara S."/>
            <person name="Imanaka T."/>
        </authorList>
    </citation>
    <scope>NUCLEOTIDE SEQUENCE [LARGE SCALE GENOMIC DNA]</scope>
    <source>
        <strain>ATCC BAA-918 / JCM 12380 / KOD1</strain>
    </source>
</reference>
<dbReference type="EC" id="2.7.1.71" evidence="1"/>
<dbReference type="EMBL" id="AP006878">
    <property type="protein sequence ID" value="BAD84453.1"/>
    <property type="molecule type" value="Genomic_DNA"/>
</dbReference>
<dbReference type="SMR" id="Q5JFT2"/>
<dbReference type="FunCoup" id="Q5JFT2">
    <property type="interactions" value="64"/>
</dbReference>
<dbReference type="STRING" id="69014.TK0264"/>
<dbReference type="EnsemblBacteria" id="BAD84453">
    <property type="protein sequence ID" value="BAD84453"/>
    <property type="gene ID" value="TK0264"/>
</dbReference>
<dbReference type="KEGG" id="tko:TK0264"/>
<dbReference type="PATRIC" id="fig|69014.16.peg.263"/>
<dbReference type="eggNOG" id="arCOG01025">
    <property type="taxonomic scope" value="Archaea"/>
</dbReference>
<dbReference type="HOGENOM" id="CLU_073768_0_0_2"/>
<dbReference type="InParanoid" id="Q5JFT2"/>
<dbReference type="OrthoDB" id="9602at2157"/>
<dbReference type="PhylomeDB" id="Q5JFT2"/>
<dbReference type="UniPathway" id="UPA00053">
    <property type="reaction ID" value="UER00088"/>
</dbReference>
<dbReference type="Proteomes" id="UP000000536">
    <property type="component" value="Chromosome"/>
</dbReference>
<dbReference type="GO" id="GO:0005737">
    <property type="term" value="C:cytoplasm"/>
    <property type="evidence" value="ECO:0007669"/>
    <property type="project" value="UniProtKB-SubCell"/>
</dbReference>
<dbReference type="GO" id="GO:0005524">
    <property type="term" value="F:ATP binding"/>
    <property type="evidence" value="ECO:0007669"/>
    <property type="project" value="UniProtKB-UniRule"/>
</dbReference>
<dbReference type="GO" id="GO:0004765">
    <property type="term" value="F:shikimate kinase activity"/>
    <property type="evidence" value="ECO:0007669"/>
    <property type="project" value="UniProtKB-UniRule"/>
</dbReference>
<dbReference type="GO" id="GO:0008652">
    <property type="term" value="P:amino acid biosynthetic process"/>
    <property type="evidence" value="ECO:0007669"/>
    <property type="project" value="UniProtKB-KW"/>
</dbReference>
<dbReference type="GO" id="GO:0009073">
    <property type="term" value="P:aromatic amino acid family biosynthetic process"/>
    <property type="evidence" value="ECO:0007669"/>
    <property type="project" value="UniProtKB-KW"/>
</dbReference>
<dbReference type="GO" id="GO:0009423">
    <property type="term" value="P:chorismate biosynthetic process"/>
    <property type="evidence" value="ECO:0007669"/>
    <property type="project" value="UniProtKB-UniRule"/>
</dbReference>
<dbReference type="Gene3D" id="3.30.230.10">
    <property type="match status" value="1"/>
</dbReference>
<dbReference type="HAMAP" id="MF_00370">
    <property type="entry name" value="Shik_kinase_arch"/>
    <property type="match status" value="1"/>
</dbReference>
<dbReference type="InterPro" id="IPR006204">
    <property type="entry name" value="GHMP_kinase_N_dom"/>
</dbReference>
<dbReference type="InterPro" id="IPR020568">
    <property type="entry name" value="Ribosomal_Su5_D2-typ_SF"/>
</dbReference>
<dbReference type="InterPro" id="IPR014721">
    <property type="entry name" value="Ribsml_uS5_D2-typ_fold_subgr"/>
</dbReference>
<dbReference type="InterPro" id="IPR010189">
    <property type="entry name" value="SK_arc"/>
</dbReference>
<dbReference type="NCBIfam" id="TIGR01920">
    <property type="entry name" value="Shik_kin_archae"/>
    <property type="match status" value="1"/>
</dbReference>
<dbReference type="PANTHER" id="PTHR20861">
    <property type="entry name" value="HOMOSERINE/4-DIPHOSPHOCYTIDYL-2-C-METHYL-D-ERYTHRITOL KINASE"/>
    <property type="match status" value="1"/>
</dbReference>
<dbReference type="PANTHER" id="PTHR20861:SF3">
    <property type="entry name" value="SHIKIMATE KINASE"/>
    <property type="match status" value="1"/>
</dbReference>
<dbReference type="Pfam" id="PF00288">
    <property type="entry name" value="GHMP_kinases_N"/>
    <property type="match status" value="1"/>
</dbReference>
<dbReference type="PIRSF" id="PIRSF005758">
    <property type="entry name" value="Shikimt_kin_arch"/>
    <property type="match status" value="1"/>
</dbReference>
<dbReference type="SUPFAM" id="SSF54211">
    <property type="entry name" value="Ribosomal protein S5 domain 2-like"/>
    <property type="match status" value="1"/>
</dbReference>
<evidence type="ECO:0000255" key="1">
    <source>
        <dbReference type="HAMAP-Rule" id="MF_00370"/>
    </source>
</evidence>
<name>AROK_THEKO</name>
<proteinExistence type="inferred from homology"/>
<keyword id="KW-0028">Amino-acid biosynthesis</keyword>
<keyword id="KW-0057">Aromatic amino acid biosynthesis</keyword>
<keyword id="KW-0067">ATP-binding</keyword>
<keyword id="KW-0963">Cytoplasm</keyword>
<keyword id="KW-0418">Kinase</keyword>
<keyword id="KW-0547">Nucleotide-binding</keyword>
<keyword id="KW-1185">Reference proteome</keyword>
<keyword id="KW-0808">Transferase</keyword>